<accession>P51176</accession>
<accession>Q3ZBH7</accession>
<organism>
    <name type="scientific">Bos taurus</name>
    <name type="common">Bovine</name>
    <dbReference type="NCBI Taxonomy" id="9913"/>
    <lineage>
        <taxon>Eukaryota</taxon>
        <taxon>Metazoa</taxon>
        <taxon>Chordata</taxon>
        <taxon>Craniata</taxon>
        <taxon>Vertebrata</taxon>
        <taxon>Euteleostomi</taxon>
        <taxon>Mammalia</taxon>
        <taxon>Eutheria</taxon>
        <taxon>Laurasiatheria</taxon>
        <taxon>Artiodactyla</taxon>
        <taxon>Ruminantia</taxon>
        <taxon>Pecora</taxon>
        <taxon>Bovidae</taxon>
        <taxon>Bovinae</taxon>
        <taxon>Bos</taxon>
    </lineage>
</organism>
<keyword id="KW-0007">Acetylation</keyword>
<keyword id="KW-0012">Acyltransferase</keyword>
<keyword id="KW-0106">Calcium</keyword>
<keyword id="KW-1003">Cell membrane</keyword>
<keyword id="KW-0158">Chromosome</keyword>
<keyword id="KW-0963">Cytoplasm</keyword>
<keyword id="KW-0903">Direct protein sequencing</keyword>
<keyword id="KW-1015">Disulfide bond</keyword>
<keyword id="KW-0272">Extracellular matrix</keyword>
<keyword id="KW-0342">GTP-binding</keyword>
<keyword id="KW-0378">Hydrolase</keyword>
<keyword id="KW-1017">Isopeptide bond</keyword>
<keyword id="KW-0472">Membrane</keyword>
<keyword id="KW-0479">Metal-binding</keyword>
<keyword id="KW-0496">Mitochondrion</keyword>
<keyword id="KW-0547">Nucleotide-binding</keyword>
<keyword id="KW-0539">Nucleus</keyword>
<keyword id="KW-0645">Protease</keyword>
<keyword id="KW-1185">Reference proteome</keyword>
<keyword id="KW-0702">S-nitrosylation</keyword>
<keyword id="KW-0964">Secreted</keyword>
<keyword id="KW-0808">Transferase</keyword>
<dbReference type="EC" id="2.3.2.13" evidence="14"/>
<dbReference type="EC" id="3.4.-.-" evidence="3"/>
<dbReference type="EC" id="3.5.1.44" evidence="3"/>
<dbReference type="EC" id="2.3.1.-" evidence="3 2 9"/>
<dbReference type="EMBL" id="X60686">
    <property type="protein sequence ID" value="CAA43097.1"/>
    <property type="molecule type" value="mRNA"/>
</dbReference>
<dbReference type="EMBL" id="BC103290">
    <property type="protein sequence ID" value="AAI03291.1"/>
    <property type="molecule type" value="mRNA"/>
</dbReference>
<dbReference type="PIR" id="S19680">
    <property type="entry name" value="S19680"/>
</dbReference>
<dbReference type="RefSeq" id="NP_803473.1">
    <property type="nucleotide sequence ID" value="NM_177507.2"/>
</dbReference>
<dbReference type="SMR" id="P51176"/>
<dbReference type="FunCoup" id="P51176">
    <property type="interactions" value="723"/>
</dbReference>
<dbReference type="STRING" id="9913.ENSBTAP00000021569"/>
<dbReference type="PaxDb" id="9913-ENSBTAP00000021569"/>
<dbReference type="PeptideAtlas" id="P51176"/>
<dbReference type="GeneID" id="281528"/>
<dbReference type="KEGG" id="bta:281528"/>
<dbReference type="CTD" id="7052"/>
<dbReference type="eggNOG" id="ENOG502QUSX">
    <property type="taxonomic scope" value="Eukaryota"/>
</dbReference>
<dbReference type="HOGENOM" id="CLU_013435_1_0_1"/>
<dbReference type="InParanoid" id="P51176"/>
<dbReference type="OrthoDB" id="437511at2759"/>
<dbReference type="TreeFam" id="TF324278"/>
<dbReference type="Proteomes" id="UP000009136">
    <property type="component" value="Unplaced"/>
</dbReference>
<dbReference type="GO" id="GO:0000785">
    <property type="term" value="C:chromatin"/>
    <property type="evidence" value="ECO:0000250"/>
    <property type="project" value="UniProtKB"/>
</dbReference>
<dbReference type="GO" id="GO:0005829">
    <property type="term" value="C:cytosol"/>
    <property type="evidence" value="ECO:0000250"/>
    <property type="project" value="UniProtKB"/>
</dbReference>
<dbReference type="GO" id="GO:0005576">
    <property type="term" value="C:extracellular region"/>
    <property type="evidence" value="ECO:0007669"/>
    <property type="project" value="UniProtKB-KW"/>
</dbReference>
<dbReference type="GO" id="GO:0005739">
    <property type="term" value="C:mitochondrion"/>
    <property type="evidence" value="ECO:0000318"/>
    <property type="project" value="GO_Central"/>
</dbReference>
<dbReference type="GO" id="GO:0005634">
    <property type="term" value="C:nucleus"/>
    <property type="evidence" value="ECO:0000250"/>
    <property type="project" value="UniProtKB"/>
</dbReference>
<dbReference type="GO" id="GO:0005886">
    <property type="term" value="C:plasma membrane"/>
    <property type="evidence" value="ECO:0007669"/>
    <property type="project" value="UniProtKB-SubCell"/>
</dbReference>
<dbReference type="GO" id="GO:0005509">
    <property type="term" value="F:calcium ion binding"/>
    <property type="evidence" value="ECO:0000250"/>
    <property type="project" value="UniProtKB"/>
</dbReference>
<dbReference type="GO" id="GO:0005525">
    <property type="term" value="F:GTP binding"/>
    <property type="evidence" value="ECO:0000250"/>
    <property type="project" value="UniProtKB"/>
</dbReference>
<dbReference type="GO" id="GO:0120297">
    <property type="term" value="F:histone dopaminyltransferase activity"/>
    <property type="evidence" value="ECO:0000250"/>
    <property type="project" value="UniProtKB"/>
</dbReference>
<dbReference type="GO" id="GO:0120295">
    <property type="term" value="F:histone serotonyltransferase activity"/>
    <property type="evidence" value="ECO:0000250"/>
    <property type="project" value="UniProtKB"/>
</dbReference>
<dbReference type="GO" id="GO:0008233">
    <property type="term" value="F:peptidase activity"/>
    <property type="evidence" value="ECO:0007669"/>
    <property type="project" value="UniProtKB-KW"/>
</dbReference>
<dbReference type="GO" id="GO:0120299">
    <property type="term" value="F:peptide histaminyltransferase activity"/>
    <property type="evidence" value="ECO:0000250"/>
    <property type="project" value="UniProtKB"/>
</dbReference>
<dbReference type="GO" id="GO:0120298">
    <property type="term" value="F:peptide noradrenalinyltransferase activity"/>
    <property type="evidence" value="ECO:0007669"/>
    <property type="project" value="RHEA"/>
</dbReference>
<dbReference type="GO" id="GO:0120294">
    <property type="term" value="F:peptide serotonyltransferase activity"/>
    <property type="evidence" value="ECO:0000314"/>
    <property type="project" value="UniProtKB"/>
</dbReference>
<dbReference type="GO" id="GO:0003810">
    <property type="term" value="F:protein-glutamine gamma-glutamyltransferase activity"/>
    <property type="evidence" value="ECO:0000314"/>
    <property type="project" value="UniProtKB"/>
</dbReference>
<dbReference type="GO" id="GO:0050568">
    <property type="term" value="F:protein-glutamine glutaminase activity"/>
    <property type="evidence" value="ECO:0007669"/>
    <property type="project" value="UniProtKB-EC"/>
</dbReference>
<dbReference type="GO" id="GO:0060348">
    <property type="term" value="P:bone development"/>
    <property type="evidence" value="ECO:0000314"/>
    <property type="project" value="UniProtKB"/>
</dbReference>
<dbReference type="GO" id="GO:1903351">
    <property type="term" value="P:cellular response to dopamine"/>
    <property type="evidence" value="ECO:0000250"/>
    <property type="project" value="UniProtKB"/>
</dbReference>
<dbReference type="GO" id="GO:1904015">
    <property type="term" value="P:cellular response to serotonin"/>
    <property type="evidence" value="ECO:0000250"/>
    <property type="project" value="UniProtKB"/>
</dbReference>
<dbReference type="GO" id="GO:0018149">
    <property type="term" value="P:peptide cross-linking"/>
    <property type="evidence" value="ECO:0000314"/>
    <property type="project" value="UniProtKB"/>
</dbReference>
<dbReference type="GO" id="GO:0007200">
    <property type="term" value="P:phospholipase C-activating G protein-coupled receptor signaling pathway"/>
    <property type="evidence" value="ECO:0000250"/>
    <property type="project" value="UniProtKB"/>
</dbReference>
<dbReference type="GO" id="GO:0043065">
    <property type="term" value="P:positive regulation of apoptotic process"/>
    <property type="evidence" value="ECO:0000250"/>
    <property type="project" value="UniProtKB"/>
</dbReference>
<dbReference type="GO" id="GO:0043547">
    <property type="term" value="P:positive regulation of GTPase activity"/>
    <property type="evidence" value="ECO:0000250"/>
    <property type="project" value="UniProtKB"/>
</dbReference>
<dbReference type="GO" id="GO:0051057">
    <property type="term" value="P:positive regulation of small GTPase mediated signal transduction"/>
    <property type="evidence" value="ECO:0000250"/>
    <property type="project" value="UniProtKB"/>
</dbReference>
<dbReference type="GO" id="GO:0018277">
    <property type="term" value="P:protein deamination"/>
    <property type="evidence" value="ECO:0000250"/>
    <property type="project" value="UniProtKB"/>
</dbReference>
<dbReference type="GO" id="GO:0051260">
    <property type="term" value="P:protein homooligomerization"/>
    <property type="evidence" value="ECO:0000250"/>
    <property type="project" value="UniProtKB"/>
</dbReference>
<dbReference type="GO" id="GO:0006508">
    <property type="term" value="P:proteolysis"/>
    <property type="evidence" value="ECO:0007669"/>
    <property type="project" value="UniProtKB-KW"/>
</dbReference>
<dbReference type="GO" id="GO:2000425">
    <property type="term" value="P:regulation of apoptotic cell clearance"/>
    <property type="evidence" value="ECO:0000250"/>
    <property type="project" value="UniProtKB"/>
</dbReference>
<dbReference type="GO" id="GO:0042981">
    <property type="term" value="P:regulation of apoptotic process"/>
    <property type="evidence" value="ECO:0000250"/>
    <property type="project" value="UniProtKB"/>
</dbReference>
<dbReference type="FunFam" id="2.60.40.10:FF:000090">
    <property type="entry name" value="Protein-glutamine gamma-glutamyltransferase 2"/>
    <property type="match status" value="1"/>
</dbReference>
<dbReference type="FunFam" id="2.60.40.10:FF:000278">
    <property type="entry name" value="Protein-glutamine gamma-glutamyltransferase 2"/>
    <property type="match status" value="1"/>
</dbReference>
<dbReference type="FunFam" id="2.60.40.10:FF:001042">
    <property type="entry name" value="Protein-glutamine gamma-glutamyltransferase 2"/>
    <property type="match status" value="1"/>
</dbReference>
<dbReference type="FunFam" id="3.90.260.10:FF:000001">
    <property type="entry name" value="Protein-glutamine gamma-glutamyltransferase 2"/>
    <property type="match status" value="1"/>
</dbReference>
<dbReference type="Gene3D" id="2.60.40.10">
    <property type="entry name" value="Immunoglobulins"/>
    <property type="match status" value="3"/>
</dbReference>
<dbReference type="Gene3D" id="3.90.260.10">
    <property type="entry name" value="Transglutaminase-like"/>
    <property type="match status" value="1"/>
</dbReference>
<dbReference type="InterPro" id="IPR013783">
    <property type="entry name" value="Ig-like_fold"/>
</dbReference>
<dbReference type="InterPro" id="IPR014756">
    <property type="entry name" value="Ig_E-set"/>
</dbReference>
<dbReference type="InterPro" id="IPR038765">
    <property type="entry name" value="Papain-like_cys_pep_sf"/>
</dbReference>
<dbReference type="InterPro" id="IPR050779">
    <property type="entry name" value="Transglutaminase"/>
</dbReference>
<dbReference type="InterPro" id="IPR002931">
    <property type="entry name" value="Transglutaminase-like"/>
</dbReference>
<dbReference type="InterPro" id="IPR036985">
    <property type="entry name" value="Transglutaminase-like_sf"/>
</dbReference>
<dbReference type="InterPro" id="IPR023608">
    <property type="entry name" value="Transglutaminase_animal"/>
</dbReference>
<dbReference type="InterPro" id="IPR013808">
    <property type="entry name" value="Transglutaminase_AS"/>
</dbReference>
<dbReference type="InterPro" id="IPR008958">
    <property type="entry name" value="Transglutaminase_C"/>
</dbReference>
<dbReference type="InterPro" id="IPR036238">
    <property type="entry name" value="Transglutaminase_C_sf"/>
</dbReference>
<dbReference type="InterPro" id="IPR001102">
    <property type="entry name" value="Transglutaminase_N"/>
</dbReference>
<dbReference type="PANTHER" id="PTHR11590">
    <property type="entry name" value="PROTEIN-GLUTAMINE GAMMA-GLUTAMYLTRANSFERASE"/>
    <property type="match status" value="1"/>
</dbReference>
<dbReference type="PANTHER" id="PTHR11590:SF6">
    <property type="entry name" value="PROTEIN-GLUTAMINE GAMMA-GLUTAMYLTRANSFERASE 2"/>
    <property type="match status" value="1"/>
</dbReference>
<dbReference type="Pfam" id="PF00927">
    <property type="entry name" value="Transglut_C"/>
    <property type="match status" value="2"/>
</dbReference>
<dbReference type="Pfam" id="PF01841">
    <property type="entry name" value="Transglut_core"/>
    <property type="match status" value="1"/>
</dbReference>
<dbReference type="Pfam" id="PF00868">
    <property type="entry name" value="Transglut_N"/>
    <property type="match status" value="1"/>
</dbReference>
<dbReference type="PIRSF" id="PIRSF000459">
    <property type="entry name" value="TGM_EBP42"/>
    <property type="match status" value="1"/>
</dbReference>
<dbReference type="SMART" id="SM00460">
    <property type="entry name" value="TGc"/>
    <property type="match status" value="1"/>
</dbReference>
<dbReference type="SUPFAM" id="SSF54001">
    <property type="entry name" value="Cysteine proteinases"/>
    <property type="match status" value="1"/>
</dbReference>
<dbReference type="SUPFAM" id="SSF81296">
    <property type="entry name" value="E set domains"/>
    <property type="match status" value="1"/>
</dbReference>
<dbReference type="SUPFAM" id="SSF49309">
    <property type="entry name" value="Transglutaminase, two C-terminal domains"/>
    <property type="match status" value="2"/>
</dbReference>
<dbReference type="PROSITE" id="PS00547">
    <property type="entry name" value="TRANSGLUTAMINASES"/>
    <property type="match status" value="1"/>
</dbReference>
<protein>
    <recommendedName>
        <fullName evidence="13">Protein-glutamine gamma-glutamyltransferase 2</fullName>
        <ecNumber evidence="14">2.3.2.13</ecNumber>
    </recommendedName>
    <alternativeName>
        <fullName evidence="13">Isopeptidase TGM2</fullName>
        <ecNumber evidence="3">3.4.-.-</ecNumber>
    </alternativeName>
    <alternativeName>
        <fullName evidence="13">Protein-glutamine deamidase TGM2</fullName>
        <ecNumber evidence="3">3.5.1.44</ecNumber>
    </alternativeName>
    <alternativeName>
        <fullName evidence="13">Protein-glutamine dopaminyltransferase TGM2</fullName>
        <ecNumber evidence="3">2.3.1.-</ecNumber>
    </alternativeName>
    <alternativeName>
        <fullName evidence="13">Protein-glutamine histaminyltransferase TGM2</fullName>
        <ecNumber evidence="3">2.3.1.-</ecNumber>
    </alternativeName>
    <alternativeName>
        <fullName evidence="13">Protein-glutamine noradrenalinyltransferase TGM2</fullName>
        <ecNumber evidence="2">2.3.1.-</ecNumber>
    </alternativeName>
    <alternativeName>
        <fullName evidence="13">Protein-glutamine serotonyltransferase TGM2</fullName>
        <ecNumber evidence="9">2.3.1.-</ecNumber>
    </alternativeName>
    <alternativeName>
        <fullName evidence="12">Tissue transglutaminase</fullName>
        <shortName evidence="12">TG</shortName>
    </alternativeName>
    <alternativeName>
        <fullName evidence="3">Transglutaminase-2</fullName>
        <shortName evidence="3">TGase-2</shortName>
    </alternativeName>
</protein>
<feature type="initiator methionine" description="Removed" evidence="2">
    <location>
        <position position="1"/>
    </location>
</feature>
<feature type="chain" id="PRO_0000213705" description="Protein-glutamine gamma-glutamyltransferase 2">
    <location>
        <begin position="2"/>
        <end position="687"/>
    </location>
</feature>
<feature type="active site" evidence="7">
    <location>
        <position position="277"/>
    </location>
</feature>
<feature type="active site" evidence="7">
    <location>
        <position position="335"/>
    </location>
</feature>
<feature type="active site" evidence="7">
    <location>
        <position position="358"/>
    </location>
</feature>
<feature type="binding site" evidence="1">
    <location>
        <position position="398"/>
    </location>
    <ligand>
        <name>Ca(2+)</name>
        <dbReference type="ChEBI" id="CHEBI:29108"/>
    </ligand>
</feature>
<feature type="binding site" evidence="1">
    <location>
        <position position="400"/>
    </location>
    <ligand>
        <name>Ca(2+)</name>
        <dbReference type="ChEBI" id="CHEBI:29108"/>
    </ligand>
</feature>
<feature type="binding site" evidence="3">
    <location>
        <position position="437"/>
    </location>
    <ligand>
        <name>Ca(2+)</name>
        <dbReference type="ChEBI" id="CHEBI:29108"/>
    </ligand>
</feature>
<feature type="binding site" evidence="1">
    <location>
        <position position="447"/>
    </location>
    <ligand>
        <name>Ca(2+)</name>
        <dbReference type="ChEBI" id="CHEBI:29108"/>
    </ligand>
</feature>
<feature type="binding site" evidence="1">
    <location>
        <position position="452"/>
    </location>
    <ligand>
        <name>Ca(2+)</name>
        <dbReference type="ChEBI" id="CHEBI:29108"/>
    </ligand>
</feature>
<feature type="binding site" evidence="3">
    <location>
        <begin position="476"/>
        <end position="483"/>
    </location>
    <ligand>
        <name>GTP</name>
        <dbReference type="ChEBI" id="CHEBI:37565"/>
    </ligand>
</feature>
<feature type="binding site" evidence="3">
    <location>
        <position position="539"/>
    </location>
    <ligand>
        <name>Ca(2+)</name>
        <dbReference type="ChEBI" id="CHEBI:29108"/>
    </ligand>
</feature>
<feature type="binding site" evidence="3">
    <location>
        <begin position="580"/>
        <end position="583"/>
    </location>
    <ligand>
        <name>GTP</name>
        <dbReference type="ChEBI" id="CHEBI:37565"/>
    </ligand>
</feature>
<feature type="site" description="Important for catalytic activity" evidence="5">
    <location>
        <position position="516"/>
    </location>
</feature>
<feature type="modified residue" description="N-acetylalanine" evidence="2">
    <location>
        <position position="2"/>
    </location>
</feature>
<feature type="modified residue" description="N6-acetyllysine" evidence="4">
    <location>
        <position position="468"/>
    </location>
</feature>
<feature type="disulfide bond" description="Alternate" evidence="3">
    <location>
        <begin position="230"/>
        <end position="370"/>
    </location>
</feature>
<feature type="disulfide bond" description="Alternate" evidence="3">
    <location>
        <begin position="370"/>
        <end position="371"/>
    </location>
</feature>
<feature type="cross-link" description="Isoglutamyl lysine isopeptide (Gln-Lys) (interchain with K-?)" evidence="2">
    <location>
        <position position="633"/>
    </location>
</feature>
<feature type="sequence conflict" description="In Ref. 2; AAI03291." evidence="13" ref="2">
    <original>V</original>
    <variation>I</variation>
    <location>
        <position position="638"/>
    </location>
</feature>
<gene>
    <name evidence="3" type="primary">TGM2</name>
</gene>
<proteinExistence type="evidence at protein level"/>
<evidence type="ECO:0000250" key="1">
    <source>
        <dbReference type="UniProtKB" id="P00488"/>
    </source>
</evidence>
<evidence type="ECO:0000250" key="2">
    <source>
        <dbReference type="UniProtKB" id="P08587"/>
    </source>
</evidence>
<evidence type="ECO:0000250" key="3">
    <source>
        <dbReference type="UniProtKB" id="P21980"/>
    </source>
</evidence>
<evidence type="ECO:0000250" key="4">
    <source>
        <dbReference type="UniProtKB" id="P21981"/>
    </source>
</evidence>
<evidence type="ECO:0000250" key="5">
    <source>
        <dbReference type="UniProtKB" id="P52181"/>
    </source>
</evidence>
<evidence type="ECO:0000250" key="6">
    <source>
        <dbReference type="UniProtKB" id="Q9WVJ6"/>
    </source>
</evidence>
<evidence type="ECO:0000255" key="7">
    <source>
        <dbReference type="PROSITE-ProRule" id="PRU10024"/>
    </source>
</evidence>
<evidence type="ECO:0000269" key="8">
    <source>
    </source>
</evidence>
<evidence type="ECO:0000269" key="9">
    <source>
    </source>
</evidence>
<evidence type="ECO:0000269" key="10">
    <source>
    </source>
</evidence>
<evidence type="ECO:0000269" key="11">
    <source>
    </source>
</evidence>
<evidence type="ECO:0000303" key="12">
    <source>
    </source>
</evidence>
<evidence type="ECO:0000305" key="13"/>
<evidence type="ECO:0000305" key="14">
    <source>
    </source>
</evidence>
<name>TGM2_BOVIN</name>
<comment type="function">
    <text evidence="2 3 4 9 11">Calcium-dependent acyltransferase that catalyzes the formation of covalent bonds between peptide-bound glutamine and various primary amines, such as gamma-amino group of peptide-bound lysine, or mono- and polyamines, thereby producing cross-linked or aminated proteins, respectively (By similarity). Involved in many biological processes, such as bone development, angiogenesis, wound healing, cellular differentiation, chromatin modification and apoptosis (PubMed:9880554). Acts as a protein-glutamine gamma-glutamyltransferase by mediating the cross-linking of proteins, such as ACO2, HSPB6, FN1, HMGB1, RAP1GDS1, SLC25A4/ANT1, SPP1 and WDR54 (PubMed:9880554). Under physiological conditions, the protein cross-linking activity is inhibited by GTP; inhibition is relieved by Ca(2+) in response to various stresses (By similarity). When secreted, catalyzes cross-linking of proteins of the extracellular matrix, such as FN1 and SPP1 resulting in the formation of scaffolds (By similarity). Plays a key role during apoptosis, both by (1) promoting the cross-linking of cytoskeletal proteins resulting in condensation of the cytoplasm, and by (2) mediating cross-linking proteins of the extracellular matrix, resulting in the irreversible formation of scaffolds that stabilize the integrity of the dying cells before their clearance by phagocytosis, thereby preventing the leakage of harmful intracellular components (By similarity). In addition to protein cross-linking, can use different monoamine substrates to catalyze a vast array of protein post-translational modifications: mediates aminylation of serotonin, dopamine, noradrenaline or histamine into glutamine residues of target proteins to generate protein serotonylation, dopaminylation, noradrenalinylation or histaminylation, respectively (PubMed:25128524). Mediates protein serotonylation of small GTPases during activation and aggregation of platelets, leading to constitutive activation of these GTPases (By similarity). Plays a key role in chromatin organization by mediating serotonylation and dopaminylation of histone H3 (By similarity). Catalyzes serotonylation of 'Gln-5' of histone H3 (H3Q5ser) during serotonergic neuron differentiation, thereby facilitating transcription (By similarity). Acts as a mediator of neurotransmission-independent role of nuclear dopamine in ventral tegmental area (VTA) neurons: catalyzes dopaminylation of 'Gln-5' of histone H3 (H3Q5dop), thereby regulating relapse-related transcriptional plasticity in the reward system (By similarity). Regulates vein remodeling by mediating serotonylation and subsequent inactivation of ATP2A2/SERCA2 (By similarity). Also acts as a protein deamidase by mediating the side chain deamidation of specific glutamine residues of proteins to glutamate (By similarity). Catalyzes specific deamidation of protein gliadin, a component of wheat gluten in the diet (By similarity). May also act as an isopeptidase cleaving the previously formed cross-links (By similarity). Also able to participate in signaling pathways independently of its acyltransferase activity: acts as a signal transducer in alpha-1 adrenergic receptor-mediated stimulation of phospholipase C-delta (PLCD) activity and is required for coupling alpha-1 adrenergic agonists to the stimulation of phosphoinositide lipid metabolism (By similarity).</text>
</comment>
<comment type="catalytic activity">
    <reaction evidence="7 14">
        <text>L-glutaminyl-[protein] + L-lysyl-[protein] = [protein]-L-lysyl-N(6)-5-L-glutamyl-[protein] + NH4(+)</text>
        <dbReference type="Rhea" id="RHEA:54816"/>
        <dbReference type="Rhea" id="RHEA-COMP:9752"/>
        <dbReference type="Rhea" id="RHEA-COMP:10207"/>
        <dbReference type="Rhea" id="RHEA-COMP:14005"/>
        <dbReference type="ChEBI" id="CHEBI:28938"/>
        <dbReference type="ChEBI" id="CHEBI:29969"/>
        <dbReference type="ChEBI" id="CHEBI:30011"/>
        <dbReference type="ChEBI" id="CHEBI:138370"/>
        <dbReference type="EC" id="2.3.2.13"/>
    </reaction>
    <physiologicalReaction direction="left-to-right" evidence="14">
        <dbReference type="Rhea" id="RHEA:54817"/>
    </physiologicalReaction>
</comment>
<comment type="catalytic activity">
    <reaction evidence="9">
        <text>L-glutaminyl-[protein] + serotonin = 5-serotonyl-L-glutamyl-[protein] + NH4(+)</text>
        <dbReference type="Rhea" id="RHEA:66552"/>
        <dbReference type="Rhea" id="RHEA-COMP:10207"/>
        <dbReference type="Rhea" id="RHEA-COMP:17052"/>
        <dbReference type="ChEBI" id="CHEBI:28938"/>
        <dbReference type="ChEBI" id="CHEBI:30011"/>
        <dbReference type="ChEBI" id="CHEBI:167174"/>
        <dbReference type="ChEBI" id="CHEBI:350546"/>
    </reaction>
    <physiologicalReaction direction="left-to-right" evidence="9">
        <dbReference type="Rhea" id="RHEA:66553"/>
    </physiologicalReaction>
</comment>
<comment type="catalytic activity">
    <reaction evidence="3">
        <text>L-glutaminyl-[protein] + dopamine = 5-dopaminyl-L-glutamyl-[protein] + NH4(+)</text>
        <dbReference type="Rhea" id="RHEA:66556"/>
        <dbReference type="Rhea" id="RHEA-COMP:10207"/>
        <dbReference type="Rhea" id="RHEA-COMP:17053"/>
        <dbReference type="ChEBI" id="CHEBI:28938"/>
        <dbReference type="ChEBI" id="CHEBI:30011"/>
        <dbReference type="ChEBI" id="CHEBI:59905"/>
        <dbReference type="ChEBI" id="CHEBI:167175"/>
    </reaction>
    <physiologicalReaction direction="left-to-right" evidence="3">
        <dbReference type="Rhea" id="RHEA:66557"/>
    </physiologicalReaction>
</comment>
<comment type="catalytic activity">
    <reaction evidence="3">
        <text>L-glutaminyl-[protein] + histamine = 5-histaminyl-L-glutamyl-[protein] + NH4(+)</text>
        <dbReference type="Rhea" id="RHEA:66564"/>
        <dbReference type="Rhea" id="RHEA-COMP:10207"/>
        <dbReference type="Rhea" id="RHEA-COMP:17056"/>
        <dbReference type="ChEBI" id="CHEBI:28938"/>
        <dbReference type="ChEBI" id="CHEBI:30011"/>
        <dbReference type="ChEBI" id="CHEBI:58432"/>
        <dbReference type="ChEBI" id="CHEBI:167179"/>
    </reaction>
    <physiologicalReaction direction="left-to-right" evidence="3">
        <dbReference type="Rhea" id="RHEA:66565"/>
    </physiologicalReaction>
</comment>
<comment type="catalytic activity">
    <reaction evidence="2">
        <text>L-glutaminyl-[protein] + (R)-noradrenaline = 5-(R)-noradrenalinyl-L-glutamyl-[protein] + NH4(+)</text>
        <dbReference type="Rhea" id="RHEA:66560"/>
        <dbReference type="Rhea" id="RHEA-COMP:10207"/>
        <dbReference type="Rhea" id="RHEA-COMP:17054"/>
        <dbReference type="ChEBI" id="CHEBI:28938"/>
        <dbReference type="ChEBI" id="CHEBI:30011"/>
        <dbReference type="ChEBI" id="CHEBI:72587"/>
        <dbReference type="ChEBI" id="CHEBI:167178"/>
    </reaction>
    <physiologicalReaction direction="left-to-right" evidence="2">
        <dbReference type="Rhea" id="RHEA:66561"/>
    </physiologicalReaction>
</comment>
<comment type="catalytic activity">
    <reaction evidence="3">
        <text>L-glutaminyl-[protein] + H2O = L-glutamyl-[protein] + NH4(+)</text>
        <dbReference type="Rhea" id="RHEA:16441"/>
        <dbReference type="Rhea" id="RHEA-COMP:10207"/>
        <dbReference type="Rhea" id="RHEA-COMP:10208"/>
        <dbReference type="ChEBI" id="CHEBI:15377"/>
        <dbReference type="ChEBI" id="CHEBI:28938"/>
        <dbReference type="ChEBI" id="CHEBI:29973"/>
        <dbReference type="ChEBI" id="CHEBI:30011"/>
        <dbReference type="EC" id="3.5.1.44"/>
    </reaction>
    <physiologicalReaction direction="left-to-right" evidence="3">
        <dbReference type="Rhea" id="RHEA:16442"/>
    </physiologicalReaction>
</comment>
<comment type="cofactor">
    <cofactor evidence="3">
        <name>Ca(2+)</name>
        <dbReference type="ChEBI" id="CHEBI:29108"/>
    </cofactor>
</comment>
<comment type="activity regulation">
    <text evidence="3">Acyltransferase activity is regulated by the binding of GTP and Ca(2+): inactivated by GTP, which stabilizes its closed structure, thereby obstructing the accessibility of substrates to the active sites. In contrast, Ca(2+) acts as a cofactor by inducing conformational change to the active open form. In absence of Ca(2+), Mg(2+) may bind Ca(2+)-binding sites, promoting GTP-binding and subsequent inhibition of the acyltransferase activity. Extracellularly reduced and activated by CLIC3.</text>
</comment>
<comment type="subunit">
    <text evidence="3 6">Monomer. Interacts with phospholipase C; promoting alpha-1 adrenergic receptor signaling (By similarity). Interacts with PLCD1 (By similarity).</text>
</comment>
<comment type="subcellular location">
    <subcellularLocation>
        <location evidence="3">Cytoplasm</location>
        <location evidence="3">Cytosol</location>
    </subcellularLocation>
    <subcellularLocation>
        <location evidence="3">Nucleus</location>
    </subcellularLocation>
    <subcellularLocation>
        <location evidence="3">Chromosome</location>
    </subcellularLocation>
    <subcellularLocation>
        <location evidence="3">Secreted</location>
        <location evidence="3">Extracellular space</location>
        <location evidence="3">Extracellular matrix</location>
    </subcellularLocation>
    <subcellularLocation>
        <location evidence="6">Cell membrane</location>
    </subcellularLocation>
    <subcellularLocation>
        <location evidence="3">Mitochondrion</location>
    </subcellularLocation>
    <text evidence="3">Mainly localizes to the cytosol. Present at much lower level in the nucleus and chromatin. Also secreted via a non-classical secretion pathway to the extracellular matrix.</text>
</comment>
<comment type="tissue specificity">
    <text evidence="8">Highest levels are detected in the lung. Lower levels are found in the liver, spleen and heart, but not in the brain.</text>
</comment>
<comment type="induction">
    <text evidence="10">By retinoic acid.</text>
</comment>
<comment type="PTM">
    <text evidence="3">Disulfide bond formation inactivates the calcium-dependent acyltransferase activity. Cys-370 can form disulfide bonds with both Cys-230 and Cys-371: formation of a disulfide bond between Cys-230 and Cys-370 facilitates formation of the disulfide between Cys-370 and Cys-371, which promotes inactivation of the acyltransferase activity. May also form interchain disulfids between Cys-230 and Cys-370. Ca(2+) protects against disulfide bond formation and inactivation.</text>
</comment>
<comment type="PTM">
    <text evidence="2">Auto-transglutaminated: Forms covalent cross-links mediated by transglutaminase between Gln-633 and the epsilon-amino group of a lysine residue of itself or HMGB1, forming homopolymers and heteropolymers, respectively.</text>
</comment>
<comment type="PTM">
    <text evidence="4">S-nitrosylated, leading to inactivation of the acyltransferase activity.</text>
</comment>
<comment type="similarity">
    <text evidence="13">Belongs to the transglutaminase superfamily. Transglutaminase family.</text>
</comment>
<sequence length="687" mass="77112">MAEELVLERCDLELEANGRDHHTADLCRERLVVRRGQPFWLTLHFEGRNYEASVDSLTFCAVTGPDPSEEAGTKALFRLSDATEEGAWAAVAADQRDSTLSLHLSTPANAPVGHYRLSLEASTGYQGSSFMLGQFTLLFNSWCPADAVYLDSDEERQEYVLTQQGFIYQGSAKFIKNIPWNFGQFEEGILDICLMLLDVNPKFLRNAGRDCSRRSSPVYVGRVVSGMVNCNDDQGVLLGRWDNNYADGISPMSWIGSVDILRRWKRDGCQRVKYGQCWVFAAVACTVLRCLGIPTRVVTNYNSAHDQNSNLLIEYFRNEFGEIQSDKSEMIWNFHCWVESWMTRPDLQPGYEGWQALDPTPQEKSEGTYCCGPVPVRAIKEGDLSTKYDAPFVFAEVNADVVDWIRQDDGSLHKSINHSLVVGLKISTKCVGRDDREDITHSYKYPEGSPEEREAFTRANHLNKLVNKEETGVAMRIRVGEGMNRGCDFDVFAHITNSTPEEHTGRLLLCARTVSYNGILGPECGTKDLLSLSLEPYSEKSIPLRILYEKYCDCLTESNLIKVRGLLIEPAANSYLLAERDIYLENPEIKIRILGEPKQNRKLVAEISLQNPLTVALSGCTFTVEGAGLIEEQKTVDVPDPVEAGEEVKVRVDLLPLYVGRHKLVVNFESDRLKAVKGFRNVIVGPS</sequence>
<reference key="1">
    <citation type="journal article" date="1991" name="Eur. J. Biochem.">
        <title>Cloning and sequence analysis of cDNA clones for bovine aortic-endothelial-cell transglutaminase.</title>
        <authorList>
            <person name="Nakanishi K."/>
            <person name="Nara K."/>
            <person name="Hagiwara H."/>
            <person name="Aoyama Y."/>
            <person name="Ueno H."/>
            <person name="Hirose S."/>
        </authorList>
    </citation>
    <scope>NUCLEOTIDE SEQUENCE [MRNA]</scope>
    <scope>PROTEIN SEQUENCE OF 79-95; 157-166; 242-251 AND 581-587</scope>
    <scope>TISSUE SPECIFICITY</scope>
    <source>
        <tissue>Artery</tissue>
    </source>
</reference>
<reference key="2">
    <citation type="submission" date="2005-08" db="EMBL/GenBank/DDBJ databases">
        <authorList>
            <consortium name="NIH - Mammalian Gene Collection (MGC) project"/>
        </authorList>
    </citation>
    <scope>NUCLEOTIDE SEQUENCE [LARGE SCALE MRNA]</scope>
    <source>
        <strain>Hereford</strain>
        <tissue>Uterus</tissue>
    </source>
</reference>
<reference key="3">
    <citation type="journal article" date="1989" name="J. Biol. Chem.">
        <title>Retinol-induced morphological changes of cultured bovine endothelial cells are accompanied by a marked increase in transglutaminase.</title>
        <authorList>
            <person name="Nara K."/>
            <person name="Nakanishi K."/>
            <person name="Hagiwara H."/>
            <person name="Wakita K."/>
            <person name="Kojima S."/>
            <person name="Hirose S."/>
        </authorList>
    </citation>
    <scope>PROTEIN SEQUENCE OF 79-95; 157-166 AND 242-251</scope>
    <scope>INDUCTION</scope>
</reference>
<reference key="4">
    <citation type="journal article" date="1999" name="J. Biol. Chem.">
        <title>Cross-linking of osteopontin by tissue transglutaminase increases its collagen binding properties.</title>
        <authorList>
            <person name="Kaartinen M.T."/>
            <person name="Pirhonen A."/>
            <person name="Linnala-Kankkunen A."/>
            <person name="Maeenpaeae P.H."/>
        </authorList>
    </citation>
    <scope>FUNCTION</scope>
    <scope>CATALYTIC ACTIVITY</scope>
</reference>
<reference key="5">
    <citation type="journal article" date="2014" name="Am. J. Physiol.">
        <title>Role of hypoxia-induced transglutaminase 2 in pulmonary artery smooth muscle cell proliferation.</title>
        <authorList>
            <person name="Penumatsa K.C."/>
            <person name="Toksoz D."/>
            <person name="Warburton R.R."/>
            <person name="Hilmer A.J."/>
            <person name="Liu T."/>
            <person name="Khosla C."/>
            <person name="Comhair S.A."/>
            <person name="Fanburg B.L."/>
        </authorList>
    </citation>
    <scope>FUNCTION</scope>
    <scope>CATALYTIC ACTIVITY</scope>
</reference>